<proteinExistence type="evidence at transcript level"/>
<reference key="1">
    <citation type="journal article" date="2022" name="J. Infect. Dis.">
        <title>Exportation of Monkeypox virus from the African continent.</title>
        <authorList>
            <person name="Mauldin M.R."/>
            <person name="McCollum A.M."/>
            <person name="Nakazawa Y.J."/>
            <person name="Mandra A."/>
            <person name="Whitehouse E.R."/>
            <person name="Davidson W."/>
            <person name="Zhao H."/>
            <person name="Gao J."/>
            <person name="Li Y."/>
            <person name="Doty J."/>
            <person name="Yinka-Ogunleye A."/>
            <person name="Akinpelu A."/>
            <person name="Aruna O."/>
            <person name="Naidoo D."/>
            <person name="Lewandowski K."/>
            <person name="Afrough B."/>
            <person name="Graham V."/>
            <person name="Aarons E."/>
            <person name="Hewson R."/>
            <person name="Vipond R."/>
            <person name="Dunning J."/>
            <person name="Chand M."/>
            <person name="Brown C."/>
            <person name="Cohen-Gihon I."/>
            <person name="Erez N."/>
            <person name="Shifman O."/>
            <person name="Israeli O."/>
            <person name="Sharon M."/>
            <person name="Schwartz E."/>
            <person name="Beth-Din A."/>
            <person name="Zvi A."/>
            <person name="Mak T.M."/>
            <person name="Ng Y.K."/>
            <person name="Cui L."/>
            <person name="Lin R.T.P."/>
            <person name="Olson V.A."/>
            <person name="Brooks T."/>
            <person name="Paran N."/>
            <person name="Ihekweazu C."/>
            <person name="Reynolds M.G."/>
        </authorList>
    </citation>
    <scope>NUCLEOTIDE SEQUENCE [LARGE SCALE GENOMIC DNA]</scope>
    <source>
        <strain>MPXV-M5312_HM12_Rivers</strain>
    </source>
</reference>
<feature type="chain" id="PRO_0000457596" description="Protein OPG176">
    <location>
        <begin position="1"/>
        <end position="240"/>
    </location>
</feature>
<name>PG176_MONPV</name>
<organismHost>
    <name type="scientific">Cynomys gunnisoni</name>
    <name type="common">Gunnison's prairie dog</name>
    <name type="synonym">Spermophilus gunnisoni</name>
    <dbReference type="NCBI Taxonomy" id="45479"/>
</organismHost>
<organismHost>
    <name type="scientific">Cynomys leucurus</name>
    <name type="common">White-tailed prairie dog</name>
    <dbReference type="NCBI Taxonomy" id="99825"/>
</organismHost>
<organismHost>
    <name type="scientific">Cynomys ludovicianus</name>
    <name type="common">Black-tailed prairie dog</name>
    <dbReference type="NCBI Taxonomy" id="45480"/>
</organismHost>
<organismHost>
    <name type="scientific">Cynomys mexicanus</name>
    <name type="common">Mexican prairie dog</name>
    <dbReference type="NCBI Taxonomy" id="99826"/>
</organismHost>
<organismHost>
    <name type="scientific">Cynomys parvidens</name>
    <name type="common">Utah prairie dog</name>
    <dbReference type="NCBI Taxonomy" id="99827"/>
</organismHost>
<organismHost>
    <name type="scientific">Gliridae</name>
    <name type="common">dormice</name>
    <dbReference type="NCBI Taxonomy" id="30650"/>
</organismHost>
<organismHost>
    <name type="scientific">Heliosciurus ruwenzorii</name>
    <name type="common">Ruwenzori sun squirrel</name>
    <dbReference type="NCBI Taxonomy" id="226685"/>
</organismHost>
<organismHost>
    <name type="scientific">Homo sapiens</name>
    <name type="common">Human</name>
    <dbReference type="NCBI Taxonomy" id="9606"/>
</organismHost>
<organismHost>
    <name type="scientific">Mus musculus</name>
    <name type="common">Mouse</name>
    <dbReference type="NCBI Taxonomy" id="10090"/>
</organismHost>
<gene>
    <name type="primary">OPG176</name>
    <name type="ORF">MPXVgp157</name>
</gene>
<organism>
    <name type="scientific">Monkeypox virus</name>
    <dbReference type="NCBI Taxonomy" id="10244"/>
    <lineage>
        <taxon>Viruses</taxon>
        <taxon>Varidnaviria</taxon>
        <taxon>Bamfordvirae</taxon>
        <taxon>Nucleocytoviricota</taxon>
        <taxon>Pokkesviricetes</taxon>
        <taxon>Chitovirales</taxon>
        <taxon>Poxviridae</taxon>
        <taxon>Chordopoxvirinae</taxon>
        <taxon>Orthopoxvirus</taxon>
    </lineage>
</organism>
<sequence length="240" mass="27698">MAFDISVNASKTINALVYFSTQQDKLVIRNEVNDIHYTVEFDRDKVVDTFISYNRHNDSIEIRGVLPEETNIGRVVNTPVSMTYLYNKYSFKPILAEYIRHRNTISGNIYSALMTLDDLVIKQYGDIDLLFNEKLKVDSDSGLFDFVNFVKDMICCDSRIVVALSSLVSKHWELTNKKYRCMALAEHIADSIPISELSRLRYNLCKYLRGHTDSIEDEFDHFEDDDLSTCSAVTDRETDV</sequence>
<evidence type="ECO:0000250" key="1">
    <source>
        <dbReference type="UniProtKB" id="P26672"/>
    </source>
</evidence>
<evidence type="ECO:0000305" key="2"/>
<accession>A0A7H0DNE4</accession>
<comment type="function">
    <text evidence="1">BCL2-like protein which disrupts the host immune response by inhibiting the TLR4 signaling pathway leading to NF-kappa-B activation. Acts close to the plasma membrane and targets several host TIR-domain containing adapter proteins including MYD88, TIRAP, TRIF and TICAM2. In turn, blocks the host NF-kappa-B and TRIF-mediated IRF3 activation.</text>
</comment>
<comment type="subunit">
    <text evidence="1">Tetramer. Interacts with host MYD88, TRF4, TICAM2 and MAL.</text>
</comment>
<comment type="induction">
    <text>Expressed in the early phase of the viral replicative cycle.</text>
</comment>
<comment type="similarity">
    <text evidence="2">Belongs to the orthopoxvirus OPG176 family.</text>
</comment>
<protein>
    <recommendedName>
        <fullName>Protein OPG176</fullName>
    </recommendedName>
</protein>
<keyword id="KW-0244">Early protein</keyword>
<keyword id="KW-0945">Host-virus interaction</keyword>
<keyword id="KW-1090">Inhibition of host innate immune response by virus</keyword>
<keyword id="KW-1092">Inhibition of host IRF3 by virus</keyword>
<keyword id="KW-1100">Inhibition of host NF-kappa-B by virus</keyword>
<keyword id="KW-1113">Inhibition of host RLR pathway by virus</keyword>
<keyword id="KW-1185">Reference proteome</keyword>
<keyword id="KW-0899">Viral immunoevasion</keyword>
<dbReference type="EMBL" id="MT903340">
    <property type="protein sequence ID" value="QNP13027.1"/>
    <property type="molecule type" value="Genomic_DNA"/>
</dbReference>
<dbReference type="RefSeq" id="YP_010377154.1">
    <property type="nucleotide sequence ID" value="NC_063383.1"/>
</dbReference>
<dbReference type="SMR" id="A0A7H0DNE4"/>
<dbReference type="GeneID" id="72551568"/>
<dbReference type="Proteomes" id="UP000516359">
    <property type="component" value="Genome"/>
</dbReference>
<dbReference type="GO" id="GO:0039548">
    <property type="term" value="P:symbiont-mediated suppression of host cytoplasmic pattern recognition receptor signaling pathway via inhibition of IRF3 activity"/>
    <property type="evidence" value="ECO:0007669"/>
    <property type="project" value="UniProtKB-KW"/>
</dbReference>
<dbReference type="GO" id="GO:0085034">
    <property type="term" value="P:symbiont-mediated suppression of host NF-kappaB cascade"/>
    <property type="evidence" value="ECO:0007669"/>
    <property type="project" value="UniProtKB-KW"/>
</dbReference>
<dbReference type="Gene3D" id="1.10.437.20">
    <property type="entry name" value="dsDNA poxvirus"/>
    <property type="match status" value="1"/>
</dbReference>
<dbReference type="InterPro" id="IPR022819">
    <property type="entry name" value="Poxvirus_Bcl-2-like"/>
</dbReference>
<dbReference type="InterPro" id="IPR043018">
    <property type="entry name" value="Poxvirus_sf"/>
</dbReference>
<dbReference type="Pfam" id="PF06227">
    <property type="entry name" value="Poxv_Bcl-2-like"/>
    <property type="match status" value="1"/>
</dbReference>